<organism>
    <name type="scientific">Aspergillus terreus</name>
    <dbReference type="NCBI Taxonomy" id="33178"/>
    <lineage>
        <taxon>Eukaryota</taxon>
        <taxon>Fungi</taxon>
        <taxon>Dikarya</taxon>
        <taxon>Ascomycota</taxon>
        <taxon>Pezizomycotina</taxon>
        <taxon>Eurotiomycetes</taxon>
        <taxon>Eurotiomycetidae</taxon>
        <taxon>Eurotiales</taxon>
        <taxon>Aspergillaceae</taxon>
        <taxon>Aspergillus</taxon>
        <taxon>Aspergillus subgen. Circumdati</taxon>
    </lineage>
</organism>
<accession>Q9Y7D2</accession>
<feature type="chain" id="PRO_0000114451" description="3-hydroxy-3-methylglutaryl-coenzyme A reductase">
    <location>
        <begin position="1"/>
        <end position="1048"/>
    </location>
</feature>
<feature type="topological domain" description="Cytoplasmic" evidence="2">
    <location>
        <begin position="1"/>
        <end position="32"/>
    </location>
</feature>
<feature type="transmembrane region" description="Helical" evidence="4">
    <location>
        <begin position="33"/>
        <end position="53"/>
    </location>
</feature>
<feature type="topological domain" description="Lumenal" evidence="2">
    <location>
        <begin position="54"/>
        <end position="220"/>
    </location>
</feature>
<feature type="transmembrane region" description="Helical" evidence="4">
    <location>
        <begin position="221"/>
        <end position="241"/>
    </location>
</feature>
<feature type="topological domain" description="Cytoplasmic" evidence="2">
    <location>
        <begin position="242"/>
        <end position="250"/>
    </location>
</feature>
<feature type="transmembrane region" description="Helical" evidence="4">
    <location>
        <begin position="251"/>
        <end position="271"/>
    </location>
</feature>
<feature type="topological domain" description="Lumenal" evidence="2">
    <location>
        <begin position="272"/>
        <end position="276"/>
    </location>
</feature>
<feature type="transmembrane region" description="Helical" evidence="4">
    <location>
        <begin position="277"/>
        <end position="297"/>
    </location>
</feature>
<feature type="topological domain" description="Cytoplasmic" evidence="2">
    <location>
        <begin position="298"/>
        <end position="348"/>
    </location>
</feature>
<feature type="transmembrane region" description="Helical" evidence="4">
    <location>
        <begin position="349"/>
        <end position="369"/>
    </location>
</feature>
<feature type="topological domain" description="Lumenal" evidence="2">
    <location>
        <begin position="370"/>
        <end position="377"/>
    </location>
</feature>
<feature type="transmembrane region" description="Helical" evidence="4">
    <location>
        <begin position="378"/>
        <end position="398"/>
    </location>
</feature>
<feature type="topological domain" description="Cytoplasmic" evidence="2">
    <location>
        <begin position="399"/>
        <end position="439"/>
    </location>
</feature>
<feature type="transmembrane region" description="Helical" evidence="4">
    <location>
        <begin position="440"/>
        <end position="460"/>
    </location>
</feature>
<feature type="topological domain" description="Lumenal" evidence="2">
    <location>
        <begin position="461"/>
        <end position="542"/>
    </location>
</feature>
<feature type="transmembrane region" description="Helical" evidence="4">
    <location>
        <begin position="543"/>
        <end position="563"/>
    </location>
</feature>
<feature type="topological domain" description="Cytoplasmic" evidence="2">
    <location>
        <begin position="564"/>
        <end position="1048"/>
    </location>
</feature>
<feature type="domain" description="SSD" evidence="5">
    <location>
        <begin position="222"/>
        <end position="403"/>
    </location>
</feature>
<feature type="active site" description="Charge relay system" evidence="1">
    <location>
        <position position="729"/>
    </location>
</feature>
<feature type="active site" description="Charge relay system" evidence="1">
    <location>
        <position position="863"/>
    </location>
</feature>
<feature type="active site" description="Charge relay system" evidence="1">
    <location>
        <position position="939"/>
    </location>
</feature>
<feature type="active site" description="Proton donor" evidence="6">
    <location>
        <position position="1035"/>
    </location>
</feature>
<feature type="binding site" evidence="1">
    <location>
        <begin position="735"/>
        <end position="741"/>
    </location>
    <ligand>
        <name>CoA</name>
        <dbReference type="ChEBI" id="CHEBI:57287"/>
    </ligand>
</feature>
<feature type="binding site" evidence="1">
    <location>
        <begin position="796"/>
        <end position="798"/>
    </location>
    <ligand>
        <name>NADP(+)</name>
        <dbReference type="ChEBI" id="CHEBI:58349"/>
    </ligand>
</feature>
<feature type="binding site" evidence="1">
    <location>
        <begin position="823"/>
        <end position="831"/>
    </location>
    <ligand>
        <name>NADP(+)</name>
        <dbReference type="ChEBI" id="CHEBI:58349"/>
    </ligand>
</feature>
<feature type="binding site" evidence="1">
    <location>
        <begin position="892"/>
        <end position="894"/>
    </location>
    <ligand>
        <name>CoA</name>
        <dbReference type="ChEBI" id="CHEBI:57287"/>
    </ligand>
</feature>
<feature type="binding site" evidence="1">
    <location>
        <begin position="1034"/>
        <end position="1035"/>
    </location>
    <ligand>
        <name>CoA</name>
        <dbReference type="ChEBI" id="CHEBI:57287"/>
    </ligand>
</feature>
<feature type="binding site" evidence="1">
    <location>
        <begin position="1039"/>
        <end position="1040"/>
    </location>
    <ligand>
        <name>NADP(+)</name>
        <dbReference type="ChEBI" id="CHEBI:58349"/>
    </ligand>
</feature>
<feature type="glycosylation site" description="N-linked (GlcNAc...) asparagine" evidence="4">
    <location>
        <position position="470"/>
    </location>
</feature>
<feature type="glycosylation site" description="N-linked (GlcNAc...) asparagine" evidence="4">
    <location>
        <position position="520"/>
    </location>
</feature>
<sequence length="1048" mass="112451">MDPVVRKPDPGGVQHRVTKALRAIVGHACRHPIHTLLVTALTAATTHLHVLEGTYQATHRGLAPWAKETPLNVQSFLWGSRTVSLGEASAWKWQIDDRPKVPEDGQSDFHWALVTLDLPGASVDASIPFLSNTLSGFLGAEQTTPTPDSSPSPDHSALTFRVPYSQLDGFLQAVEIIPSEKEDDSWRLRSPREEGSPRSLGHWLGSSWLSFLHRVHHAETVDLVIIGLSYLAMNMTVVSLFRVMRHLGSRFWLAASVLLSGAFAFVLGLGITTTCDVPVDMLLLFEGIPYLVLTVGFEKPIQLTRAVLCVSEELWGGGQRQVPNGASSDDSRQNQLIPNIIQLAVDREGWYIVRSYLLEIGALALGAVLRPKDSLGHFCFLAAWTLLIDAVLLFTFYATILCVKLEITRIRSPGGLGQVNAKHPSGIFGHKVKSTNITWWKLLTVGGFVLCHFLQLSPFFYRVMGEYMANGTLPPTAVSPFKEAANGLNEIYLTARVEGFETRVTVLPPLQYVLESAGFNISATKRSTFDGVLDGLESPLGRLCLMGALVVSLVLNNHLIHAARWHAWPQARESAVPDGSYLSVPCSATAPEVCTRPPEETEALLKSNQAESLTDDELVELCLRGKIAGYSLEKTLERIAAGSSRSVTRLEAFTRAVRIRRAAVSKTPSTQNLCSGLAESLLPYRDYNYELVHGACCENVVGYLPLPLGVAGPMVIDGQALFIPMATTEGVLVASASRGCKAINAGGGATTMLKGDGMTRGPCLRFPSAQRAAEAQRWVESPLGHEVLAAAFNATSRFARLQTLTVAQAGIYLYIRFRTTTGDAMGMNMISKGVEKALEAMAAEGGFPDMHTVTLSGNFCSDKKSAAINWIGGRGKSVIAEATIPAETVRQVLKTDVDALVELNTAKNLVGSAMAGSLGGFNAHASNLVQAVFLATGQDPAQNVESSSCITTMKNIDGNLHIAVSMPSMEVGTIGGGTILEAQGAMLDLLGVRGAHSTEPGANARRLARIVAAAVLAGELSTCAALAAGHLVNAHMQHNRSAGATVKK</sequence>
<protein>
    <recommendedName>
        <fullName evidence="3">3-hydroxy-3-methylglutaryl-coenzyme A reductase</fullName>
        <shortName evidence="3">HMG-CoA reductase</shortName>
        <ecNumber evidence="3">1.1.1.34</ecNumber>
    </recommendedName>
</protein>
<dbReference type="EC" id="1.1.1.34" evidence="3"/>
<dbReference type="EMBL" id="AH007774">
    <property type="protein sequence ID" value="AAD34556.1"/>
    <property type="status" value="ALT_SEQ"/>
    <property type="molecule type" value="Genomic_DNA"/>
</dbReference>
<dbReference type="SMR" id="Q9Y7D2"/>
<dbReference type="VEuPathDB" id="FungiDB:ATEG_09965"/>
<dbReference type="UniPathway" id="UPA00058">
    <property type="reaction ID" value="UER00103"/>
</dbReference>
<dbReference type="GO" id="GO:0005789">
    <property type="term" value="C:endoplasmic reticulum membrane"/>
    <property type="evidence" value="ECO:0007669"/>
    <property type="project" value="UniProtKB-SubCell"/>
</dbReference>
<dbReference type="GO" id="GO:0005778">
    <property type="term" value="C:peroxisomal membrane"/>
    <property type="evidence" value="ECO:0007669"/>
    <property type="project" value="TreeGrafter"/>
</dbReference>
<dbReference type="GO" id="GO:0004420">
    <property type="term" value="F:hydroxymethylglutaryl-CoA reductase (NADPH) activity"/>
    <property type="evidence" value="ECO:0007669"/>
    <property type="project" value="UniProtKB-EC"/>
</dbReference>
<dbReference type="GO" id="GO:0015936">
    <property type="term" value="P:coenzyme A metabolic process"/>
    <property type="evidence" value="ECO:0007669"/>
    <property type="project" value="InterPro"/>
</dbReference>
<dbReference type="GO" id="GO:0006696">
    <property type="term" value="P:ergosterol biosynthetic process"/>
    <property type="evidence" value="ECO:0007669"/>
    <property type="project" value="TreeGrafter"/>
</dbReference>
<dbReference type="GO" id="GO:0008299">
    <property type="term" value="P:isoprenoid biosynthetic process"/>
    <property type="evidence" value="ECO:0007669"/>
    <property type="project" value="InterPro"/>
</dbReference>
<dbReference type="CDD" id="cd00643">
    <property type="entry name" value="HMG-CoA_reductase_classI"/>
    <property type="match status" value="1"/>
</dbReference>
<dbReference type="FunFam" id="1.10.3270.10:FF:000001">
    <property type="entry name" value="3-hydroxy-3-methylglutaryl coenzyme A reductase"/>
    <property type="match status" value="1"/>
</dbReference>
<dbReference type="FunFam" id="3.30.70.420:FF:000001">
    <property type="entry name" value="3-hydroxy-3-methylglutaryl coenzyme A reductase"/>
    <property type="match status" value="1"/>
</dbReference>
<dbReference type="FunFam" id="3.90.770.10:FF:000001">
    <property type="entry name" value="3-hydroxy-3-methylglutaryl coenzyme A reductase"/>
    <property type="match status" value="1"/>
</dbReference>
<dbReference type="Gene3D" id="3.90.770.10">
    <property type="entry name" value="3-hydroxy-3-methylglutaryl-coenzyme A Reductase, Chain A, domain 2"/>
    <property type="match status" value="1"/>
</dbReference>
<dbReference type="Gene3D" id="1.10.3270.10">
    <property type="entry name" value="HMGR, N-terminal domain"/>
    <property type="match status" value="1"/>
</dbReference>
<dbReference type="Gene3D" id="3.30.70.420">
    <property type="entry name" value="Hydroxymethylglutaryl-CoA reductase, class I/II, NAD/NADP-binding domain"/>
    <property type="match status" value="1"/>
</dbReference>
<dbReference type="InterPro" id="IPR025583">
    <property type="entry name" value="HMG-CoA_N_dom"/>
</dbReference>
<dbReference type="InterPro" id="IPR002202">
    <property type="entry name" value="HMG_CoA_Rdtase"/>
</dbReference>
<dbReference type="InterPro" id="IPR023074">
    <property type="entry name" value="HMG_CoA_Rdtase_cat_sf"/>
</dbReference>
<dbReference type="InterPro" id="IPR023076">
    <property type="entry name" value="HMG_CoA_Rdtase_CS"/>
</dbReference>
<dbReference type="InterPro" id="IPR004554">
    <property type="entry name" value="HMG_CoA_Rdtase_eu_arc"/>
</dbReference>
<dbReference type="InterPro" id="IPR023282">
    <property type="entry name" value="HMG_CoA_Rdtase_N"/>
</dbReference>
<dbReference type="InterPro" id="IPR009023">
    <property type="entry name" value="HMG_CoA_Rdtase_NAD(P)-bd_sf"/>
</dbReference>
<dbReference type="InterPro" id="IPR009029">
    <property type="entry name" value="HMG_CoA_Rdtase_sub-bd_dom_sf"/>
</dbReference>
<dbReference type="InterPro" id="IPR053958">
    <property type="entry name" value="HMGCR/SNAP/NPC1-like_SSD"/>
</dbReference>
<dbReference type="InterPro" id="IPR000731">
    <property type="entry name" value="SSD"/>
</dbReference>
<dbReference type="NCBIfam" id="TIGR00533">
    <property type="entry name" value="HMG_CoA_R_NADP"/>
    <property type="match status" value="1"/>
</dbReference>
<dbReference type="PANTHER" id="PTHR10572">
    <property type="entry name" value="3-HYDROXY-3-METHYLGLUTARYL-COENZYME A REDUCTASE"/>
    <property type="match status" value="1"/>
</dbReference>
<dbReference type="PANTHER" id="PTHR10572:SF24">
    <property type="entry name" value="3-HYDROXY-3-METHYLGLUTARYL-COENZYME A REDUCTASE"/>
    <property type="match status" value="1"/>
</dbReference>
<dbReference type="Pfam" id="PF00368">
    <property type="entry name" value="HMG-CoA_red"/>
    <property type="match status" value="1"/>
</dbReference>
<dbReference type="Pfam" id="PF13323">
    <property type="entry name" value="HPIH"/>
    <property type="match status" value="1"/>
</dbReference>
<dbReference type="Pfam" id="PF12349">
    <property type="entry name" value="Sterol-sensing"/>
    <property type="match status" value="1"/>
</dbReference>
<dbReference type="PRINTS" id="PR00071">
    <property type="entry name" value="HMGCOARDTASE"/>
</dbReference>
<dbReference type="SUPFAM" id="SSF55035">
    <property type="entry name" value="NAD-binding domain of HMG-CoA reductase"/>
    <property type="match status" value="1"/>
</dbReference>
<dbReference type="SUPFAM" id="SSF56542">
    <property type="entry name" value="Substrate-binding domain of HMG-CoA reductase"/>
    <property type="match status" value="1"/>
</dbReference>
<dbReference type="PROSITE" id="PS00066">
    <property type="entry name" value="HMG_COA_REDUCTASE_1"/>
    <property type="match status" value="1"/>
</dbReference>
<dbReference type="PROSITE" id="PS00318">
    <property type="entry name" value="HMG_COA_REDUCTASE_2"/>
    <property type="match status" value="1"/>
</dbReference>
<dbReference type="PROSITE" id="PS01192">
    <property type="entry name" value="HMG_COA_REDUCTASE_3"/>
    <property type="match status" value="1"/>
</dbReference>
<dbReference type="PROSITE" id="PS50065">
    <property type="entry name" value="HMG_COA_REDUCTASE_4"/>
    <property type="match status" value="1"/>
</dbReference>
<dbReference type="PROSITE" id="PS50156">
    <property type="entry name" value="SSD"/>
    <property type="match status" value="1"/>
</dbReference>
<evidence type="ECO:0000250" key="1">
    <source>
        <dbReference type="UniProtKB" id="P04035"/>
    </source>
</evidence>
<evidence type="ECO:0000250" key="2">
    <source>
        <dbReference type="UniProtKB" id="P12684"/>
    </source>
</evidence>
<evidence type="ECO:0000250" key="3">
    <source>
        <dbReference type="UniProtKB" id="Q4WHZ1"/>
    </source>
</evidence>
<evidence type="ECO:0000255" key="4"/>
<evidence type="ECO:0000255" key="5">
    <source>
        <dbReference type="PROSITE-ProRule" id="PRU00199"/>
    </source>
</evidence>
<evidence type="ECO:0000255" key="6">
    <source>
        <dbReference type="PROSITE-ProRule" id="PRU10003"/>
    </source>
</evidence>
<evidence type="ECO:0000305" key="7"/>
<reference key="1">
    <citation type="journal article" date="1999" name="Science">
        <title>Modulation of polyketide synthase activity by accessory proteins during lovastatin biosynthesis.</title>
        <authorList>
            <person name="Kennedy J."/>
            <person name="Auclair K."/>
            <person name="Kendrew S.G."/>
            <person name="Park C."/>
            <person name="Vederas J.C."/>
            <person name="Hutchinson C.R."/>
        </authorList>
    </citation>
    <scope>NUCLEOTIDE SEQUENCE [GENOMIC DNA]</scope>
    <source>
        <strain>ATCC 20542 / MF4845</strain>
    </source>
</reference>
<name>HMDH_ASPTE</name>
<proteinExistence type="inferred from homology"/>
<comment type="function">
    <text evidence="3">HMG-CoA reductase; part of the first module of ergosterol biosynthesis pathway that includes the early steps of the pathway, conserved across all eukaryotes, and which results in the formation of mevalonate from acetyl-coenzyme A (acetyl-CoA) (By similarity). In this module, the cytosolic acetyl-CoA acetyltransferase catalyzes the formation of acetoacetyl-CoA (By similarity). The hydroxymethylglutaryl-CoA synthase then condenses acetyl-CoA with acetoacetyl-CoA to form HMG-CoA (By similarity). The rate-limiting step of the early module is the reduction to mevalonate by the 3-hydroxy-3-methylglutaryl-coenzyme A (HMG-CoA) reductase (By similarity).</text>
</comment>
<comment type="catalytic activity">
    <reaction evidence="6">
        <text>(R)-mevalonate + 2 NADP(+) + CoA = (3S)-3-hydroxy-3-methylglutaryl-CoA + 2 NADPH + 2 H(+)</text>
        <dbReference type="Rhea" id="RHEA:15989"/>
        <dbReference type="ChEBI" id="CHEBI:15378"/>
        <dbReference type="ChEBI" id="CHEBI:36464"/>
        <dbReference type="ChEBI" id="CHEBI:43074"/>
        <dbReference type="ChEBI" id="CHEBI:57287"/>
        <dbReference type="ChEBI" id="CHEBI:57783"/>
        <dbReference type="ChEBI" id="CHEBI:58349"/>
        <dbReference type="EC" id="1.1.1.34"/>
    </reaction>
</comment>
<comment type="pathway">
    <text evidence="3">Metabolic intermediate biosynthesis; (R)-mevalonate biosynthesis; (R)-mevalonate from acetyl-CoA: step 3/3.</text>
</comment>
<comment type="subcellular location">
    <subcellularLocation>
        <location evidence="7">Endoplasmic reticulum membrane</location>
        <topology evidence="4">Multi-pass membrane protein</topology>
    </subcellularLocation>
</comment>
<comment type="similarity">
    <text evidence="7">Belongs to the HMG-CoA reductase family.</text>
</comment>
<comment type="sequence caution" evidence="7">
    <conflict type="erroneous gene model prediction">
        <sequence resource="EMBL-CDS" id="AAD34556"/>
    </conflict>
</comment>
<keyword id="KW-0256">Endoplasmic reticulum</keyword>
<keyword id="KW-0325">Glycoprotein</keyword>
<keyword id="KW-0444">Lipid biosynthesis</keyword>
<keyword id="KW-0443">Lipid metabolism</keyword>
<keyword id="KW-0472">Membrane</keyword>
<keyword id="KW-0521">NADP</keyword>
<keyword id="KW-0560">Oxidoreductase</keyword>
<keyword id="KW-0752">Steroid biosynthesis</keyword>
<keyword id="KW-0753">Steroid metabolism</keyword>
<keyword id="KW-0756">Sterol biosynthesis</keyword>
<keyword id="KW-1207">Sterol metabolism</keyword>
<keyword id="KW-0812">Transmembrane</keyword>
<keyword id="KW-1133">Transmembrane helix</keyword>